<name>RS8E_THEVO</name>
<feature type="chain" id="PRO_0000122283" description="Small ribosomal subunit protein eS8">
    <location>
        <begin position="1"/>
        <end position="127"/>
    </location>
</feature>
<feature type="region of interest" description="Disordered" evidence="2">
    <location>
        <begin position="1"/>
        <end position="25"/>
    </location>
</feature>
<protein>
    <recommendedName>
        <fullName evidence="1">Small ribosomal subunit protein eS8</fullName>
    </recommendedName>
    <alternativeName>
        <fullName evidence="3">30S ribosomal protein S8e</fullName>
    </alternativeName>
</protein>
<sequence>MTIFQGKSGKKPTGGNLKQAKKKRRFELGREPTLTKLGTKVERKVIRTMGGNSKAILFTADTANVYDIHEKKIKKVKIITVKENPANSHYVQRNIINKGTIISTEIGEAIVTSRPGQDGVINAKLLN</sequence>
<proteinExistence type="inferred from homology"/>
<gene>
    <name evidence="1" type="primary">rps8e</name>
    <name type="ordered locus">TV0555</name>
    <name type="ORF">TVG0543769</name>
</gene>
<comment type="subunit">
    <text evidence="1">Part of the 30S ribosomal subunit.</text>
</comment>
<comment type="similarity">
    <text evidence="1">Belongs to the eukaryotic ribosomal protein eS8 family.</text>
</comment>
<keyword id="KW-0687">Ribonucleoprotein</keyword>
<keyword id="KW-0689">Ribosomal protein</keyword>
<evidence type="ECO:0000255" key="1">
    <source>
        <dbReference type="HAMAP-Rule" id="MF_00029"/>
    </source>
</evidence>
<evidence type="ECO:0000256" key="2">
    <source>
        <dbReference type="SAM" id="MobiDB-lite"/>
    </source>
</evidence>
<evidence type="ECO:0000305" key="3"/>
<accession>Q97BA2</accession>
<reference key="1">
    <citation type="journal article" date="2000" name="Proc. Natl. Acad. Sci. U.S.A.">
        <title>Archaeal adaptation to higher temperatures revealed by genomic sequence of Thermoplasma volcanium.</title>
        <authorList>
            <person name="Kawashima T."/>
            <person name="Amano N."/>
            <person name="Koike H."/>
            <person name="Makino S."/>
            <person name="Higuchi S."/>
            <person name="Kawashima-Ohya Y."/>
            <person name="Watanabe K."/>
            <person name="Yamazaki M."/>
            <person name="Kanehori K."/>
            <person name="Kawamoto T."/>
            <person name="Nunoshiba T."/>
            <person name="Yamamoto Y."/>
            <person name="Aramaki H."/>
            <person name="Makino K."/>
            <person name="Suzuki M."/>
        </authorList>
    </citation>
    <scope>NUCLEOTIDE SEQUENCE [LARGE SCALE GENOMIC DNA]</scope>
    <source>
        <strain>ATCC 51530 / DSM 4299 / JCM 9571 / NBRC 15438 / GSS1</strain>
    </source>
</reference>
<dbReference type="EMBL" id="BA000011">
    <property type="protein sequence ID" value="BAB59697.1"/>
    <property type="molecule type" value="Genomic_DNA"/>
</dbReference>
<dbReference type="RefSeq" id="WP_010916813.1">
    <property type="nucleotide sequence ID" value="NC_002689.2"/>
</dbReference>
<dbReference type="SMR" id="Q97BA2"/>
<dbReference type="STRING" id="273116.gene:9381340"/>
<dbReference type="PaxDb" id="273116-14324770"/>
<dbReference type="DNASU" id="1441071"/>
<dbReference type="GeneID" id="1441071"/>
<dbReference type="KEGG" id="tvo:TVG0543769"/>
<dbReference type="eggNOG" id="arCOG04154">
    <property type="taxonomic scope" value="Archaea"/>
</dbReference>
<dbReference type="HOGENOM" id="CLU_080597_2_1_2"/>
<dbReference type="OrthoDB" id="372305at2157"/>
<dbReference type="PhylomeDB" id="Q97BA2"/>
<dbReference type="Proteomes" id="UP000001017">
    <property type="component" value="Chromosome"/>
</dbReference>
<dbReference type="GO" id="GO:1990904">
    <property type="term" value="C:ribonucleoprotein complex"/>
    <property type="evidence" value="ECO:0007669"/>
    <property type="project" value="UniProtKB-KW"/>
</dbReference>
<dbReference type="GO" id="GO:0005840">
    <property type="term" value="C:ribosome"/>
    <property type="evidence" value="ECO:0007669"/>
    <property type="project" value="UniProtKB-KW"/>
</dbReference>
<dbReference type="GO" id="GO:0003735">
    <property type="term" value="F:structural constituent of ribosome"/>
    <property type="evidence" value="ECO:0007669"/>
    <property type="project" value="InterPro"/>
</dbReference>
<dbReference type="GO" id="GO:0006412">
    <property type="term" value="P:translation"/>
    <property type="evidence" value="ECO:0007669"/>
    <property type="project" value="UniProtKB-UniRule"/>
</dbReference>
<dbReference type="CDD" id="cd11382">
    <property type="entry name" value="Ribosomal_S8e"/>
    <property type="match status" value="1"/>
</dbReference>
<dbReference type="Gene3D" id="2.40.10.310">
    <property type="match status" value="1"/>
</dbReference>
<dbReference type="HAMAP" id="MF_00029">
    <property type="entry name" value="Ribosomal_eS8"/>
    <property type="match status" value="1"/>
</dbReference>
<dbReference type="InterPro" id="IPR001047">
    <property type="entry name" value="Ribosomal_eS8"/>
</dbReference>
<dbReference type="InterPro" id="IPR018283">
    <property type="entry name" value="Ribosomal_eS8_CS"/>
</dbReference>
<dbReference type="InterPro" id="IPR020919">
    <property type="entry name" value="Ribosomal_protein_eS8_arc"/>
</dbReference>
<dbReference type="InterPro" id="IPR022309">
    <property type="entry name" value="Ribosomal_Se8/biogenesis_NSA2"/>
</dbReference>
<dbReference type="NCBIfam" id="TIGR00307">
    <property type="entry name" value="eS8"/>
    <property type="match status" value="1"/>
</dbReference>
<dbReference type="PANTHER" id="PTHR10394">
    <property type="entry name" value="40S RIBOSOMAL PROTEIN S8"/>
    <property type="match status" value="1"/>
</dbReference>
<dbReference type="Pfam" id="PF01201">
    <property type="entry name" value="Ribosomal_S8e"/>
    <property type="match status" value="1"/>
</dbReference>
<dbReference type="PROSITE" id="PS01193">
    <property type="entry name" value="RIBOSOMAL_S8E"/>
    <property type="match status" value="1"/>
</dbReference>
<organism>
    <name type="scientific">Thermoplasma volcanium (strain ATCC 51530 / DSM 4299 / JCM 9571 / NBRC 15438 / GSS1)</name>
    <dbReference type="NCBI Taxonomy" id="273116"/>
    <lineage>
        <taxon>Archaea</taxon>
        <taxon>Methanobacteriati</taxon>
        <taxon>Thermoplasmatota</taxon>
        <taxon>Thermoplasmata</taxon>
        <taxon>Thermoplasmatales</taxon>
        <taxon>Thermoplasmataceae</taxon>
        <taxon>Thermoplasma</taxon>
    </lineage>
</organism>